<evidence type="ECO:0000250" key="1"/>
<evidence type="ECO:0000255" key="2">
    <source>
        <dbReference type="PROSITE-ProRule" id="PRU00115"/>
    </source>
</evidence>
<evidence type="ECO:0000305" key="3"/>
<dbReference type="EMBL" id="CU329671">
    <property type="protein sequence ID" value="CAA19321.1"/>
    <property type="molecule type" value="Genomic_DNA"/>
</dbReference>
<dbReference type="EMBL" id="AB028002">
    <property type="protein sequence ID" value="BAA87306.1"/>
    <property type="molecule type" value="Genomic_DNA"/>
</dbReference>
<dbReference type="PIR" id="T39449">
    <property type="entry name" value="T39449"/>
</dbReference>
<dbReference type="RefSeq" id="NP_596729.1">
    <property type="nucleotide sequence ID" value="NM_001022655.2"/>
</dbReference>
<dbReference type="SMR" id="O60100"/>
<dbReference type="BioGRID" id="276410">
    <property type="interactions" value="12"/>
</dbReference>
<dbReference type="DIP" id="DIP-38714N"/>
<dbReference type="FunCoup" id="O60100">
    <property type="interactions" value="713"/>
</dbReference>
<dbReference type="IntAct" id="O60100">
    <property type="interactions" value="2"/>
</dbReference>
<dbReference type="STRING" id="284812.O60100"/>
<dbReference type="iPTMnet" id="O60100"/>
<dbReference type="PaxDb" id="4896-SPBC14F5.03c.1"/>
<dbReference type="EnsemblFungi" id="SPBC14F5.03c.1">
    <property type="protein sequence ID" value="SPBC14F5.03c.1:pep"/>
    <property type="gene ID" value="SPBC14F5.03c"/>
</dbReference>
<dbReference type="GeneID" id="2539863"/>
<dbReference type="KEGG" id="spo:2539863"/>
<dbReference type="PomBase" id="SPBC14F5.03c">
    <property type="gene designation" value="kap123"/>
</dbReference>
<dbReference type="VEuPathDB" id="FungiDB:SPBC14F5.03c"/>
<dbReference type="eggNOG" id="KOG2171">
    <property type="taxonomic scope" value="Eukaryota"/>
</dbReference>
<dbReference type="HOGENOM" id="CLU_003794_1_1_1"/>
<dbReference type="InParanoid" id="O60100"/>
<dbReference type="OMA" id="ANACGCV"/>
<dbReference type="PhylomeDB" id="O60100"/>
<dbReference type="PRO" id="PR:O60100"/>
<dbReference type="Proteomes" id="UP000002485">
    <property type="component" value="Chromosome II"/>
</dbReference>
<dbReference type="GO" id="GO:0005737">
    <property type="term" value="C:cytoplasm"/>
    <property type="evidence" value="ECO:0000318"/>
    <property type="project" value="GO_Central"/>
</dbReference>
<dbReference type="GO" id="GO:0005829">
    <property type="term" value="C:cytosol"/>
    <property type="evidence" value="ECO:0007005"/>
    <property type="project" value="PomBase"/>
</dbReference>
<dbReference type="GO" id="GO:0005635">
    <property type="term" value="C:nuclear envelope"/>
    <property type="evidence" value="ECO:0007005"/>
    <property type="project" value="PomBase"/>
</dbReference>
<dbReference type="GO" id="GO:0034399">
    <property type="term" value="C:nuclear periphery"/>
    <property type="evidence" value="ECO:0000314"/>
    <property type="project" value="PomBase"/>
</dbReference>
<dbReference type="GO" id="GO:0005634">
    <property type="term" value="C:nucleus"/>
    <property type="evidence" value="ECO:0007005"/>
    <property type="project" value="PomBase"/>
</dbReference>
<dbReference type="GO" id="GO:0061608">
    <property type="term" value="F:nuclear import signal receptor activity"/>
    <property type="evidence" value="ECO:0000269"/>
    <property type="project" value="PomBase"/>
</dbReference>
<dbReference type="GO" id="GO:0008139">
    <property type="term" value="F:nuclear localization sequence binding"/>
    <property type="evidence" value="ECO:0000318"/>
    <property type="project" value="GO_Central"/>
</dbReference>
<dbReference type="GO" id="GO:0031267">
    <property type="term" value="F:small GTPase binding"/>
    <property type="evidence" value="ECO:0007669"/>
    <property type="project" value="InterPro"/>
</dbReference>
<dbReference type="GO" id="GO:0006606">
    <property type="term" value="P:protein import into nucleus"/>
    <property type="evidence" value="ECO:0000318"/>
    <property type="project" value="GO_Central"/>
</dbReference>
<dbReference type="Gene3D" id="1.25.10.10">
    <property type="entry name" value="Leucine-rich Repeat Variant"/>
    <property type="match status" value="1"/>
</dbReference>
<dbReference type="InterPro" id="IPR011989">
    <property type="entry name" value="ARM-like"/>
</dbReference>
<dbReference type="InterPro" id="IPR016024">
    <property type="entry name" value="ARM-type_fold"/>
</dbReference>
<dbReference type="InterPro" id="IPR021133">
    <property type="entry name" value="HEAT_type_2"/>
</dbReference>
<dbReference type="InterPro" id="IPR001494">
    <property type="entry name" value="Importin-beta_N"/>
</dbReference>
<dbReference type="InterPro" id="IPR040122">
    <property type="entry name" value="Importin_beta"/>
</dbReference>
<dbReference type="PANTHER" id="PTHR10527">
    <property type="entry name" value="IMPORTIN BETA"/>
    <property type="match status" value="1"/>
</dbReference>
<dbReference type="Pfam" id="PF13513">
    <property type="entry name" value="HEAT_EZ"/>
    <property type="match status" value="1"/>
</dbReference>
<dbReference type="Pfam" id="PF03810">
    <property type="entry name" value="IBN_N"/>
    <property type="match status" value="1"/>
</dbReference>
<dbReference type="SMART" id="SM00913">
    <property type="entry name" value="IBN_N"/>
    <property type="match status" value="1"/>
</dbReference>
<dbReference type="SUPFAM" id="SSF48371">
    <property type="entry name" value="ARM repeat"/>
    <property type="match status" value="2"/>
</dbReference>
<dbReference type="PROSITE" id="PS50077">
    <property type="entry name" value="HEAT_REPEAT"/>
    <property type="match status" value="2"/>
</dbReference>
<dbReference type="PROSITE" id="PS50166">
    <property type="entry name" value="IMPORTIN_B_NT"/>
    <property type="match status" value="1"/>
</dbReference>
<feature type="chain" id="PRO_0000120775" description="Probable importin subunit beta-4">
    <location>
        <begin position="1"/>
        <end position="1067"/>
    </location>
</feature>
<feature type="domain" description="Importin N-terminal" evidence="2">
    <location>
        <begin position="27"/>
        <end position="94"/>
    </location>
</feature>
<feature type="repeat" description="HEAT 1">
    <location>
        <begin position="159"/>
        <end position="196"/>
    </location>
</feature>
<feature type="repeat" description="HEAT 2">
    <location>
        <begin position="379"/>
        <end position="416"/>
    </location>
</feature>
<feature type="repeat" description="HEAT 3">
    <location>
        <begin position="420"/>
        <end position="457"/>
    </location>
</feature>
<feature type="repeat" description="HEAT 4">
    <location>
        <begin position="591"/>
        <end position="633"/>
    </location>
</feature>
<feature type="repeat" description="HEAT 5">
    <location>
        <begin position="890"/>
        <end position="927"/>
    </location>
</feature>
<feature type="repeat" description="HEAT 6">
    <location>
        <begin position="1013"/>
        <end position="1050"/>
    </location>
</feature>
<organism>
    <name type="scientific">Schizosaccharomyces pombe (strain 972 / ATCC 24843)</name>
    <name type="common">Fission yeast</name>
    <dbReference type="NCBI Taxonomy" id="284812"/>
    <lineage>
        <taxon>Eukaryota</taxon>
        <taxon>Fungi</taxon>
        <taxon>Dikarya</taxon>
        <taxon>Ascomycota</taxon>
        <taxon>Taphrinomycotina</taxon>
        <taxon>Schizosaccharomycetes</taxon>
        <taxon>Schizosaccharomycetales</taxon>
        <taxon>Schizosaccharomycetaceae</taxon>
        <taxon>Schizosaccharomyces</taxon>
    </lineage>
</organism>
<gene>
    <name type="primary">kap123</name>
    <name type="ORF">SPBC14F5.03c</name>
</gene>
<comment type="function">
    <text evidence="1">Required for nuclear protein import, its predominant substrate seems to be ribosomal proteins. Binds to nucleoporins and the GTP-bound form of gsp1 (Ran) (By similarity).</text>
</comment>
<comment type="subcellular location">
    <subcellularLocation>
        <location evidence="1">Cytoplasm</location>
    </subcellularLocation>
    <subcellularLocation>
        <location>Nucleus</location>
    </subcellularLocation>
    <subcellularLocation>
        <location>Nucleus envelope</location>
    </subcellularLocation>
</comment>
<comment type="similarity">
    <text evidence="3">Belongs to the importin beta family.</text>
</comment>
<sequence>MDAQFTLELTQLLFQSIAPDTTQITEATRALETKYLKEPGSLLSLFHIMGTCENPQVRQLAAIEARKLCHKYWSSVDADVQNQIRSNLLDITLKEPESIVRHAFGRVIAALAKLDLPEGKWNELSAFLVQATMDQNDSIREMAVYVLYSIAETVDLDNKLLLDFVNLFSQTITDSSRTVRVTSVQGLGAIAEVLESDDKKLLHAYRATLPGMLLVLQDVVQVGDVDASKQVFDVFNTFLIASGAIISKALGNIIEIITGIANSKQVDDEIRCMALSFIISCIRFKSRKLQALKLGKPLVLTLMEVATEETTDDIDEDCPARLALRSIDLLSTHLSPSQVFYPMFEAACAFSQSPQASYRKAALLSIGVAVEGSSESVAGNLPNIFPIIINGLCDNDMDVRQAALLALSQIAVEIPTEVSKHHAQLLPLVFELMSTQGVKVGKSACNCIDALLEGLDKSEISGYLPMLMERLVGLLEFSDTPDIKSCVAAAIGSAAFAAQDDFIPYFERTMASLSQCLHTTDDDEGYELRGTVMDTLGAIANAVGKQAFLPYTEQLIQLAYEGIQIDHSRLRECSFCFYAVLARVYKEEFAPFLEHIVPALFKSIDQDESDILSERIGAPTAEEISQLLDSVETNEEENDEELEKAMGVNSAIAMEKEIAADALGEICMYVGAPFTPYLEPTVEKLVACTTHFYEGVRKSALSSLWRCATTYYKVCNVPQWQPGLPLKVPVPDTVKNIFEAVRKCTFDTLEEEYEKTVATDILRNFAESIKTCGPVVLGDDYEKLCEVVMEVLQKQHIVQAGDVFDDDFEEEDIVSNEEVDDTEQDALLIDSACDVVIALAVALGGSFADSFKVFYPQIVKYYMSKNGNERAMAVACVGEVAGGIESAITPFTRDVFSLFMAALEDSEGEVRSNAAYSMGLLCQFSTEDLSSEYLNILQKLQPFFTQEVFRTALDNAIGCISRLILHNQNAIPVDQVLPIVFSKLPLKEDYLENAPLYHMILALYRQQNPCLVQHLGELIPVFASVLTGSPEQLNDELRSELLSMVKEIAPQYESVVSNYPQLVALLQ</sequence>
<reference key="1">
    <citation type="journal article" date="2002" name="Nature">
        <title>The genome sequence of Schizosaccharomyces pombe.</title>
        <authorList>
            <person name="Wood V."/>
            <person name="Gwilliam R."/>
            <person name="Rajandream M.A."/>
            <person name="Lyne M.H."/>
            <person name="Lyne R."/>
            <person name="Stewart A."/>
            <person name="Sgouros J.G."/>
            <person name="Peat N."/>
            <person name="Hayles J."/>
            <person name="Baker S.G."/>
            <person name="Basham D."/>
            <person name="Bowman S."/>
            <person name="Brooks K."/>
            <person name="Brown D."/>
            <person name="Brown S."/>
            <person name="Chillingworth T."/>
            <person name="Churcher C.M."/>
            <person name="Collins M."/>
            <person name="Connor R."/>
            <person name="Cronin A."/>
            <person name="Davis P."/>
            <person name="Feltwell T."/>
            <person name="Fraser A."/>
            <person name="Gentles S."/>
            <person name="Goble A."/>
            <person name="Hamlin N."/>
            <person name="Harris D.E."/>
            <person name="Hidalgo J."/>
            <person name="Hodgson G."/>
            <person name="Holroyd S."/>
            <person name="Hornsby T."/>
            <person name="Howarth S."/>
            <person name="Huckle E.J."/>
            <person name="Hunt S."/>
            <person name="Jagels K."/>
            <person name="James K.D."/>
            <person name="Jones L."/>
            <person name="Jones M."/>
            <person name="Leather S."/>
            <person name="McDonald S."/>
            <person name="McLean J."/>
            <person name="Mooney P."/>
            <person name="Moule S."/>
            <person name="Mungall K.L."/>
            <person name="Murphy L.D."/>
            <person name="Niblett D."/>
            <person name="Odell C."/>
            <person name="Oliver K."/>
            <person name="O'Neil S."/>
            <person name="Pearson D."/>
            <person name="Quail M.A."/>
            <person name="Rabbinowitsch E."/>
            <person name="Rutherford K.M."/>
            <person name="Rutter S."/>
            <person name="Saunders D."/>
            <person name="Seeger K."/>
            <person name="Sharp S."/>
            <person name="Skelton J."/>
            <person name="Simmonds M.N."/>
            <person name="Squares R."/>
            <person name="Squares S."/>
            <person name="Stevens K."/>
            <person name="Taylor K."/>
            <person name="Taylor R.G."/>
            <person name="Tivey A."/>
            <person name="Walsh S.V."/>
            <person name="Warren T."/>
            <person name="Whitehead S."/>
            <person name="Woodward J.R."/>
            <person name="Volckaert G."/>
            <person name="Aert R."/>
            <person name="Robben J."/>
            <person name="Grymonprez B."/>
            <person name="Weltjens I."/>
            <person name="Vanstreels E."/>
            <person name="Rieger M."/>
            <person name="Schaefer M."/>
            <person name="Mueller-Auer S."/>
            <person name="Gabel C."/>
            <person name="Fuchs M."/>
            <person name="Duesterhoeft A."/>
            <person name="Fritzc C."/>
            <person name="Holzer E."/>
            <person name="Moestl D."/>
            <person name="Hilbert H."/>
            <person name="Borzym K."/>
            <person name="Langer I."/>
            <person name="Beck A."/>
            <person name="Lehrach H."/>
            <person name="Reinhardt R."/>
            <person name="Pohl T.M."/>
            <person name="Eger P."/>
            <person name="Zimmermann W."/>
            <person name="Wedler H."/>
            <person name="Wambutt R."/>
            <person name="Purnelle B."/>
            <person name="Goffeau A."/>
            <person name="Cadieu E."/>
            <person name="Dreano S."/>
            <person name="Gloux S."/>
            <person name="Lelaure V."/>
            <person name="Mottier S."/>
            <person name="Galibert F."/>
            <person name="Aves S.J."/>
            <person name="Xiang Z."/>
            <person name="Hunt C."/>
            <person name="Moore K."/>
            <person name="Hurst S.M."/>
            <person name="Lucas M."/>
            <person name="Rochet M."/>
            <person name="Gaillardin C."/>
            <person name="Tallada V.A."/>
            <person name="Garzon A."/>
            <person name="Thode G."/>
            <person name="Daga R.R."/>
            <person name="Cruzado L."/>
            <person name="Jimenez J."/>
            <person name="Sanchez M."/>
            <person name="del Rey F."/>
            <person name="Benito J."/>
            <person name="Dominguez A."/>
            <person name="Revuelta J.L."/>
            <person name="Moreno S."/>
            <person name="Armstrong J."/>
            <person name="Forsburg S.L."/>
            <person name="Cerutti L."/>
            <person name="Lowe T."/>
            <person name="McCombie W.R."/>
            <person name="Paulsen I."/>
            <person name="Potashkin J."/>
            <person name="Shpakovski G.V."/>
            <person name="Ussery D."/>
            <person name="Barrell B.G."/>
            <person name="Nurse P."/>
        </authorList>
    </citation>
    <scope>NUCLEOTIDE SEQUENCE [LARGE SCALE GENOMIC DNA]</scope>
    <source>
        <strain>972 / ATCC 24843</strain>
    </source>
</reference>
<reference key="2">
    <citation type="journal article" date="2000" name="Genes Cells">
        <title>Large-scale screening of intracellular protein localization in living fission yeast cells by the use of a GFP-fusion genomic DNA library.</title>
        <authorList>
            <person name="Ding D.-Q."/>
            <person name="Tomita Y."/>
            <person name="Yamamoto A."/>
            <person name="Chikashige Y."/>
            <person name="Haraguchi T."/>
            <person name="Hiraoka Y."/>
        </authorList>
    </citation>
    <scope>NUCLEOTIDE SEQUENCE [LARGE SCALE GENOMIC DNA] OF 372-605</scope>
    <scope>SUBCELLULAR LOCATION</scope>
    <source>
        <strain>ATCC 38364 / 968</strain>
    </source>
</reference>
<reference key="3">
    <citation type="journal article" date="2006" name="Nat. Biotechnol.">
        <title>ORFeome cloning and global analysis of protein localization in the fission yeast Schizosaccharomyces pombe.</title>
        <authorList>
            <person name="Matsuyama A."/>
            <person name="Arai R."/>
            <person name="Yashiroda Y."/>
            <person name="Shirai A."/>
            <person name="Kamata A."/>
            <person name="Sekido S."/>
            <person name="Kobayashi Y."/>
            <person name="Hashimoto A."/>
            <person name="Hamamoto M."/>
            <person name="Hiraoka Y."/>
            <person name="Horinouchi S."/>
            <person name="Yoshida M."/>
        </authorList>
    </citation>
    <scope>SUBCELLULAR LOCATION [LARGE SCALE ANALYSIS]</scope>
</reference>
<keyword id="KW-0963">Cytoplasm</keyword>
<keyword id="KW-0539">Nucleus</keyword>
<keyword id="KW-0653">Protein transport</keyword>
<keyword id="KW-1185">Reference proteome</keyword>
<keyword id="KW-0677">Repeat</keyword>
<keyword id="KW-0813">Transport</keyword>
<name>IMB4_SCHPO</name>
<protein>
    <recommendedName>
        <fullName>Probable importin subunit beta-4</fullName>
    </recommendedName>
    <alternativeName>
        <fullName>Importin-123</fullName>
    </alternativeName>
    <alternativeName>
        <fullName>Karyopherin subunit beta-4</fullName>
    </alternativeName>
    <alternativeName>
        <fullName>Karyopherin-123</fullName>
    </alternativeName>
</protein>
<accession>O60100</accession>
<accession>Q9US72</accession>
<proteinExistence type="inferred from homology"/>